<proteinExistence type="inferred from homology"/>
<keyword id="KW-0413">Isomerase</keyword>
<keyword id="KW-1185">Reference proteome</keyword>
<name>RPIA_BLOFL</name>
<accession>Q7VRG1</accession>
<gene>
    <name evidence="1" type="primary">rpiA</name>
    <name type="ordered locus">Bfl256</name>
</gene>
<evidence type="ECO:0000255" key="1">
    <source>
        <dbReference type="HAMAP-Rule" id="MF_00170"/>
    </source>
</evidence>
<feature type="chain" id="PRO_0000158403" description="Ribose-5-phosphate isomerase A">
    <location>
        <begin position="1"/>
        <end position="222"/>
    </location>
</feature>
<feature type="active site" description="Proton acceptor" evidence="1">
    <location>
        <position position="104"/>
    </location>
</feature>
<feature type="binding site" evidence="1">
    <location>
        <begin position="29"/>
        <end position="32"/>
    </location>
    <ligand>
        <name>substrate</name>
    </ligand>
</feature>
<feature type="binding site" evidence="1">
    <location>
        <begin position="82"/>
        <end position="85"/>
    </location>
    <ligand>
        <name>substrate</name>
    </ligand>
</feature>
<feature type="binding site" evidence="1">
    <location>
        <begin position="95"/>
        <end position="98"/>
    </location>
    <ligand>
        <name>substrate</name>
    </ligand>
</feature>
<feature type="binding site" evidence="1">
    <location>
        <position position="122"/>
    </location>
    <ligand>
        <name>substrate</name>
    </ligand>
</feature>
<sequence>MISKDKLKKLVGWEALKYIKSNTIIGVGTGSTVNYFIEALSSIKQQIEGVVSSSQHSSNQLKKLGIPLYNLNNLNDLEIYIDSADEIDLHMQMIKGGGGALTKEKIIAFAAKKFICIVDDSKQVNILGRKGPIPVEVIPMARSVVSKSLICLGGLPEYRNGVITDNGNSILDVYNMNITDASLLEQRINNIPGVVSVGLFAQRKADIALIGTQKGIKILNSN</sequence>
<organism>
    <name type="scientific">Blochmanniella floridana</name>
    <dbReference type="NCBI Taxonomy" id="203907"/>
    <lineage>
        <taxon>Bacteria</taxon>
        <taxon>Pseudomonadati</taxon>
        <taxon>Pseudomonadota</taxon>
        <taxon>Gammaproteobacteria</taxon>
        <taxon>Enterobacterales</taxon>
        <taxon>Enterobacteriaceae</taxon>
        <taxon>ant endosymbionts</taxon>
        <taxon>Candidatus Blochmanniella</taxon>
    </lineage>
</organism>
<protein>
    <recommendedName>
        <fullName evidence="1">Ribose-5-phosphate isomerase A</fullName>
        <ecNumber evidence="1">5.3.1.6</ecNumber>
    </recommendedName>
    <alternativeName>
        <fullName evidence="1">Phosphoriboisomerase A</fullName>
        <shortName evidence="1">PRI</shortName>
    </alternativeName>
</protein>
<comment type="function">
    <text evidence="1">Catalyzes the reversible conversion of ribose-5-phosphate to ribulose 5-phosphate.</text>
</comment>
<comment type="catalytic activity">
    <reaction evidence="1">
        <text>aldehydo-D-ribose 5-phosphate = D-ribulose 5-phosphate</text>
        <dbReference type="Rhea" id="RHEA:14657"/>
        <dbReference type="ChEBI" id="CHEBI:58121"/>
        <dbReference type="ChEBI" id="CHEBI:58273"/>
        <dbReference type="EC" id="5.3.1.6"/>
    </reaction>
</comment>
<comment type="pathway">
    <text evidence="1">Carbohydrate degradation; pentose phosphate pathway; D-ribose 5-phosphate from D-ribulose 5-phosphate (non-oxidative stage): step 1/1.</text>
</comment>
<comment type="subunit">
    <text evidence="1">Homodimer.</text>
</comment>
<comment type="similarity">
    <text evidence="1">Belongs to the ribose 5-phosphate isomerase family.</text>
</comment>
<reference key="1">
    <citation type="journal article" date="2003" name="Proc. Natl. Acad. Sci. U.S.A.">
        <title>The genome sequence of Blochmannia floridanus: comparative analysis of reduced genomes.</title>
        <authorList>
            <person name="Gil R."/>
            <person name="Silva F.J."/>
            <person name="Zientz E."/>
            <person name="Delmotte F."/>
            <person name="Gonzalez-Candelas F."/>
            <person name="Latorre A."/>
            <person name="Rausell C."/>
            <person name="Kamerbeek J."/>
            <person name="Gadau J."/>
            <person name="Hoelldobler B."/>
            <person name="van Ham R.C.H.J."/>
            <person name="Gross R."/>
            <person name="Moya A."/>
        </authorList>
    </citation>
    <scope>NUCLEOTIDE SEQUENCE [LARGE SCALE GENOMIC DNA]</scope>
</reference>
<dbReference type="EC" id="5.3.1.6" evidence="1"/>
<dbReference type="EMBL" id="BX248583">
    <property type="protein sequence ID" value="CAD83327.1"/>
    <property type="molecule type" value="Genomic_DNA"/>
</dbReference>
<dbReference type="SMR" id="Q7VRG1"/>
<dbReference type="STRING" id="203907.Bfl256"/>
<dbReference type="KEGG" id="bfl:Bfl256"/>
<dbReference type="eggNOG" id="COG0120">
    <property type="taxonomic scope" value="Bacteria"/>
</dbReference>
<dbReference type="HOGENOM" id="CLU_056590_1_1_6"/>
<dbReference type="UniPathway" id="UPA00115">
    <property type="reaction ID" value="UER00412"/>
</dbReference>
<dbReference type="Proteomes" id="UP000002192">
    <property type="component" value="Chromosome"/>
</dbReference>
<dbReference type="GO" id="GO:0005829">
    <property type="term" value="C:cytosol"/>
    <property type="evidence" value="ECO:0007669"/>
    <property type="project" value="TreeGrafter"/>
</dbReference>
<dbReference type="GO" id="GO:0004751">
    <property type="term" value="F:ribose-5-phosphate isomerase activity"/>
    <property type="evidence" value="ECO:0007669"/>
    <property type="project" value="UniProtKB-UniRule"/>
</dbReference>
<dbReference type="GO" id="GO:0006014">
    <property type="term" value="P:D-ribose metabolic process"/>
    <property type="evidence" value="ECO:0007669"/>
    <property type="project" value="TreeGrafter"/>
</dbReference>
<dbReference type="GO" id="GO:0009052">
    <property type="term" value="P:pentose-phosphate shunt, non-oxidative branch"/>
    <property type="evidence" value="ECO:0007669"/>
    <property type="project" value="UniProtKB-UniRule"/>
</dbReference>
<dbReference type="CDD" id="cd01398">
    <property type="entry name" value="RPI_A"/>
    <property type="match status" value="1"/>
</dbReference>
<dbReference type="FunFam" id="3.40.50.1360:FF:000001">
    <property type="entry name" value="Ribose-5-phosphate isomerase A"/>
    <property type="match status" value="1"/>
</dbReference>
<dbReference type="Gene3D" id="3.30.70.260">
    <property type="match status" value="1"/>
</dbReference>
<dbReference type="Gene3D" id="3.40.50.1360">
    <property type="match status" value="1"/>
</dbReference>
<dbReference type="HAMAP" id="MF_00170">
    <property type="entry name" value="Rib_5P_isom_A"/>
    <property type="match status" value="1"/>
</dbReference>
<dbReference type="InterPro" id="IPR037171">
    <property type="entry name" value="NagB/RpiA_transferase-like"/>
</dbReference>
<dbReference type="InterPro" id="IPR020672">
    <property type="entry name" value="Ribose5P_isomerase_typA_subgr"/>
</dbReference>
<dbReference type="InterPro" id="IPR004788">
    <property type="entry name" value="Ribose5P_isomerase_type_A"/>
</dbReference>
<dbReference type="NCBIfam" id="NF001924">
    <property type="entry name" value="PRK00702.1"/>
    <property type="match status" value="1"/>
</dbReference>
<dbReference type="NCBIfam" id="TIGR00021">
    <property type="entry name" value="rpiA"/>
    <property type="match status" value="1"/>
</dbReference>
<dbReference type="PANTHER" id="PTHR11934">
    <property type="entry name" value="RIBOSE-5-PHOSPHATE ISOMERASE"/>
    <property type="match status" value="1"/>
</dbReference>
<dbReference type="PANTHER" id="PTHR11934:SF0">
    <property type="entry name" value="RIBOSE-5-PHOSPHATE ISOMERASE"/>
    <property type="match status" value="1"/>
</dbReference>
<dbReference type="Pfam" id="PF06026">
    <property type="entry name" value="Rib_5-P_isom_A"/>
    <property type="match status" value="1"/>
</dbReference>
<dbReference type="SUPFAM" id="SSF75445">
    <property type="entry name" value="D-ribose-5-phosphate isomerase (RpiA), lid domain"/>
    <property type="match status" value="1"/>
</dbReference>
<dbReference type="SUPFAM" id="SSF100950">
    <property type="entry name" value="NagB/RpiA/CoA transferase-like"/>
    <property type="match status" value="1"/>
</dbReference>